<keyword id="KW-0963">Cytoplasm</keyword>
<keyword id="KW-0227">DNA damage</keyword>
<keyword id="KW-0228">DNA excision</keyword>
<keyword id="KW-0234">DNA repair</keyword>
<keyword id="KW-0267">Excision nuclease</keyword>
<keyword id="KW-0742">SOS response</keyword>
<organism>
    <name type="scientific">Paraburkholderia phytofirmans (strain DSM 17436 / LMG 22146 / PsJN)</name>
    <name type="common">Burkholderia phytofirmans</name>
    <dbReference type="NCBI Taxonomy" id="398527"/>
    <lineage>
        <taxon>Bacteria</taxon>
        <taxon>Pseudomonadati</taxon>
        <taxon>Pseudomonadota</taxon>
        <taxon>Betaproteobacteria</taxon>
        <taxon>Burkholderiales</taxon>
        <taxon>Burkholderiaceae</taxon>
        <taxon>Paraburkholderia</taxon>
    </lineage>
</organism>
<comment type="function">
    <text evidence="1">The UvrABC repair system catalyzes the recognition and processing of DNA lesions. UvrC both incises the 5' and 3' sides of the lesion. The N-terminal half is responsible for the 3' incision and the C-terminal half is responsible for the 5' incision.</text>
</comment>
<comment type="subunit">
    <text evidence="1">Interacts with UvrB in an incision complex.</text>
</comment>
<comment type="subcellular location">
    <subcellularLocation>
        <location evidence="1">Cytoplasm</location>
    </subcellularLocation>
</comment>
<comment type="similarity">
    <text evidence="1">Belongs to the UvrC family.</text>
</comment>
<protein>
    <recommendedName>
        <fullName evidence="1">UvrABC system protein C</fullName>
        <shortName evidence="1">Protein UvrC</shortName>
    </recommendedName>
    <alternativeName>
        <fullName evidence="1">Excinuclease ABC subunit C</fullName>
    </alternativeName>
</protein>
<gene>
    <name evidence="1" type="primary">uvrC</name>
    <name type="ordered locus">Bphyt_2889</name>
</gene>
<name>UVRC_PARPJ</name>
<evidence type="ECO:0000255" key="1">
    <source>
        <dbReference type="HAMAP-Rule" id="MF_00203"/>
    </source>
</evidence>
<evidence type="ECO:0000256" key="2">
    <source>
        <dbReference type="SAM" id="MobiDB-lite"/>
    </source>
</evidence>
<feature type="chain" id="PRO_1000099466" description="UvrABC system protein C">
    <location>
        <begin position="1"/>
        <end position="731"/>
    </location>
</feature>
<feature type="domain" description="GIY-YIG" evidence="1">
    <location>
        <begin position="21"/>
        <end position="99"/>
    </location>
</feature>
<feature type="domain" description="UVR" evidence="1">
    <location>
        <begin position="208"/>
        <end position="243"/>
    </location>
</feature>
<feature type="region of interest" description="Disordered" evidence="2">
    <location>
        <begin position="346"/>
        <end position="381"/>
    </location>
</feature>
<feature type="compositionally biased region" description="Acidic residues" evidence="2">
    <location>
        <begin position="347"/>
        <end position="369"/>
    </location>
</feature>
<dbReference type="EMBL" id="CP001052">
    <property type="protein sequence ID" value="ACD17283.1"/>
    <property type="molecule type" value="Genomic_DNA"/>
</dbReference>
<dbReference type="RefSeq" id="WP_012433868.1">
    <property type="nucleotide sequence ID" value="NC_010681.1"/>
</dbReference>
<dbReference type="SMR" id="B2SZU5"/>
<dbReference type="STRING" id="398527.Bphyt_2889"/>
<dbReference type="KEGG" id="bpy:Bphyt_2889"/>
<dbReference type="eggNOG" id="COG0322">
    <property type="taxonomic scope" value="Bacteria"/>
</dbReference>
<dbReference type="HOGENOM" id="CLU_014841_3_0_4"/>
<dbReference type="OrthoDB" id="9804933at2"/>
<dbReference type="Proteomes" id="UP000001739">
    <property type="component" value="Chromosome 1"/>
</dbReference>
<dbReference type="GO" id="GO:0005737">
    <property type="term" value="C:cytoplasm"/>
    <property type="evidence" value="ECO:0007669"/>
    <property type="project" value="UniProtKB-SubCell"/>
</dbReference>
<dbReference type="GO" id="GO:0009380">
    <property type="term" value="C:excinuclease repair complex"/>
    <property type="evidence" value="ECO:0007669"/>
    <property type="project" value="InterPro"/>
</dbReference>
<dbReference type="GO" id="GO:0003677">
    <property type="term" value="F:DNA binding"/>
    <property type="evidence" value="ECO:0007669"/>
    <property type="project" value="UniProtKB-UniRule"/>
</dbReference>
<dbReference type="GO" id="GO:0009381">
    <property type="term" value="F:excinuclease ABC activity"/>
    <property type="evidence" value="ECO:0007669"/>
    <property type="project" value="UniProtKB-UniRule"/>
</dbReference>
<dbReference type="GO" id="GO:0006289">
    <property type="term" value="P:nucleotide-excision repair"/>
    <property type="evidence" value="ECO:0007669"/>
    <property type="project" value="UniProtKB-UniRule"/>
</dbReference>
<dbReference type="GO" id="GO:0009432">
    <property type="term" value="P:SOS response"/>
    <property type="evidence" value="ECO:0007669"/>
    <property type="project" value="UniProtKB-UniRule"/>
</dbReference>
<dbReference type="CDD" id="cd10434">
    <property type="entry name" value="GIY-YIG_UvrC_Cho"/>
    <property type="match status" value="1"/>
</dbReference>
<dbReference type="FunFam" id="3.40.1440.10:FF:000001">
    <property type="entry name" value="UvrABC system protein C"/>
    <property type="match status" value="1"/>
</dbReference>
<dbReference type="Gene3D" id="1.10.150.20">
    <property type="entry name" value="5' to 3' exonuclease, C-terminal subdomain"/>
    <property type="match status" value="1"/>
</dbReference>
<dbReference type="Gene3D" id="3.40.1440.10">
    <property type="entry name" value="GIY-YIG endonuclease"/>
    <property type="match status" value="1"/>
</dbReference>
<dbReference type="Gene3D" id="4.10.860.10">
    <property type="entry name" value="UVR domain"/>
    <property type="match status" value="1"/>
</dbReference>
<dbReference type="Gene3D" id="3.30.420.340">
    <property type="entry name" value="UvrC, RNAse H endonuclease domain"/>
    <property type="match status" value="1"/>
</dbReference>
<dbReference type="HAMAP" id="MF_00203">
    <property type="entry name" value="UvrC"/>
    <property type="match status" value="1"/>
</dbReference>
<dbReference type="InterPro" id="IPR000305">
    <property type="entry name" value="GIY-YIG_endonuc"/>
</dbReference>
<dbReference type="InterPro" id="IPR035901">
    <property type="entry name" value="GIY-YIG_endonuc_sf"/>
</dbReference>
<dbReference type="InterPro" id="IPR047296">
    <property type="entry name" value="GIY-YIG_UvrC_Cho"/>
</dbReference>
<dbReference type="InterPro" id="IPR003583">
    <property type="entry name" value="Hlx-hairpin-Hlx_DNA-bd_motif"/>
</dbReference>
<dbReference type="InterPro" id="IPR010994">
    <property type="entry name" value="RuvA_2-like"/>
</dbReference>
<dbReference type="InterPro" id="IPR001943">
    <property type="entry name" value="UVR_dom"/>
</dbReference>
<dbReference type="InterPro" id="IPR036876">
    <property type="entry name" value="UVR_dom_sf"/>
</dbReference>
<dbReference type="InterPro" id="IPR050066">
    <property type="entry name" value="UvrABC_protein_C"/>
</dbReference>
<dbReference type="InterPro" id="IPR004791">
    <property type="entry name" value="UvrC"/>
</dbReference>
<dbReference type="InterPro" id="IPR001162">
    <property type="entry name" value="UvrC_RNase_H_dom"/>
</dbReference>
<dbReference type="InterPro" id="IPR038476">
    <property type="entry name" value="UvrC_RNase_H_dom_sf"/>
</dbReference>
<dbReference type="NCBIfam" id="NF001824">
    <property type="entry name" value="PRK00558.1-5"/>
    <property type="match status" value="1"/>
</dbReference>
<dbReference type="NCBIfam" id="TIGR00194">
    <property type="entry name" value="uvrC"/>
    <property type="match status" value="1"/>
</dbReference>
<dbReference type="PANTHER" id="PTHR30562:SF1">
    <property type="entry name" value="UVRABC SYSTEM PROTEIN C"/>
    <property type="match status" value="1"/>
</dbReference>
<dbReference type="PANTHER" id="PTHR30562">
    <property type="entry name" value="UVRC/OXIDOREDUCTASE"/>
    <property type="match status" value="1"/>
</dbReference>
<dbReference type="Pfam" id="PF01541">
    <property type="entry name" value="GIY-YIG"/>
    <property type="match status" value="1"/>
</dbReference>
<dbReference type="Pfam" id="PF14520">
    <property type="entry name" value="HHH_5"/>
    <property type="match status" value="1"/>
</dbReference>
<dbReference type="Pfam" id="PF02151">
    <property type="entry name" value="UVR"/>
    <property type="match status" value="1"/>
</dbReference>
<dbReference type="Pfam" id="PF22920">
    <property type="entry name" value="UvrC_RNaseH"/>
    <property type="match status" value="2"/>
</dbReference>
<dbReference type="Pfam" id="PF08459">
    <property type="entry name" value="UvrC_RNaseH_dom"/>
    <property type="match status" value="1"/>
</dbReference>
<dbReference type="SMART" id="SM00465">
    <property type="entry name" value="GIYc"/>
    <property type="match status" value="1"/>
</dbReference>
<dbReference type="SMART" id="SM00278">
    <property type="entry name" value="HhH1"/>
    <property type="match status" value="2"/>
</dbReference>
<dbReference type="SUPFAM" id="SSF46600">
    <property type="entry name" value="C-terminal UvrC-binding domain of UvrB"/>
    <property type="match status" value="1"/>
</dbReference>
<dbReference type="SUPFAM" id="SSF82771">
    <property type="entry name" value="GIY-YIG endonuclease"/>
    <property type="match status" value="1"/>
</dbReference>
<dbReference type="SUPFAM" id="SSF47781">
    <property type="entry name" value="RuvA domain 2-like"/>
    <property type="match status" value="1"/>
</dbReference>
<dbReference type="PROSITE" id="PS50164">
    <property type="entry name" value="GIY_YIG"/>
    <property type="match status" value="1"/>
</dbReference>
<dbReference type="PROSITE" id="PS50151">
    <property type="entry name" value="UVR"/>
    <property type="match status" value="1"/>
</dbReference>
<dbReference type="PROSITE" id="PS50165">
    <property type="entry name" value="UVRC"/>
    <property type="match status" value="1"/>
</dbReference>
<reference key="1">
    <citation type="journal article" date="2011" name="J. Bacteriol.">
        <title>Complete genome sequence of the plant growth-promoting endophyte Burkholderia phytofirmans strain PsJN.</title>
        <authorList>
            <person name="Weilharter A."/>
            <person name="Mitter B."/>
            <person name="Shin M.V."/>
            <person name="Chain P.S."/>
            <person name="Nowak J."/>
            <person name="Sessitsch A."/>
        </authorList>
    </citation>
    <scope>NUCLEOTIDE SEQUENCE [LARGE SCALE GENOMIC DNA]</scope>
    <source>
        <strain>DSM 17436 / LMG 22146 / PsJN</strain>
    </source>
</reference>
<accession>B2SZU5</accession>
<proteinExistence type="inferred from homology"/>
<sequence>MTEPEATDAFEPKKVLAQLPHLPGVYRYYDTHGAVLYVGKARDLKKRVSSYFTKTLLSPRIAMMVTRIARIETTVTRSEAEALLLENNLIKALAPRYNILFRDDKSYPYLKLTGHKFPRMAYYRGAVDRKNQYFGPFPSAWAVRESIQILQRVFQLRTCEDSVFNNRTRPCLLHQIGRCTAPCVAAINEEDYARDVANASRFLLGRQGEVMKELEQKMHAFASELKFEQAAAVRNQMSSLSTVLHQQAIEVGSDSDVDILAVVALGGRVCVNLAMVRGGRHLGDKAYFPAHVESALTADEGGLQEDDAALASVALASNSLAGDDVIDDETAALADTADALAIAQEMPSEDEENEQNDAAEEVDVAEEAGSEPAKPRKGRAATGGIEAEVLEAFIAQHYLGNRVPPVLVVSHAPANRELVDVLIEQAGHKVTVLRQPQGQRRAWLTMAEQNARLALARLLSEQGSQQARTRALTDTLGMECDDLAHLRIECFDISHTMGEATQASCVVYHHHKMQSSEYRRYNITGITPGDDYAAMRQVLTRRYEKMVEQAAANAADEAAELQSDAAADPSLTPDAAEPVAAGGILPTIVLIDGGKGQVEIARQVFTELGLDTGMLVGVAKGEGRKVGLETLIFADGRAPLELGKESAALMLVAQIRDEAHRFAITGMRAKRGKTRQTSRLEELEGVGAKRRQRLLARFGGLRGVVAASVEDLASVEGISQALAEQIYRQLH</sequence>